<gene>
    <name evidence="1" type="primary">rlmN</name>
    <name type="ordered locus">RPD_0709</name>
</gene>
<evidence type="ECO:0000255" key="1">
    <source>
        <dbReference type="HAMAP-Rule" id="MF_01849"/>
    </source>
</evidence>
<evidence type="ECO:0000255" key="2">
    <source>
        <dbReference type="PROSITE-ProRule" id="PRU01266"/>
    </source>
</evidence>
<sequence>MTLAAAAQLEKTPLETYVPPAKPSLIGLSRAELAERLGHIGVAPAQRKMRAQQLWNWMYLRGARDFSEMTNVSKEMRAQLSDHFTVDRPEVVAEQISNDGTRKWLLRLPSGDDVQKAHEVECVYIPETDRGTLCVSSQVGCTLNCSFCHTGTQRLVRNLTAGEIIGQVMVARDRLNDWVDRETPNGNRLVTNIVMMGMGEPLYNFEAVRDALLIVTDNEGIGISRRRVTLSTSGVVPNIIRTGEEIGVMLAISLHAVRDELRDELVPLNRKYPLKELLQACRDYPGASNARRITFEYVMLKGVNDSLDDARRLVQLLKGIPAKINLIPFNPWPGSAYECSDWDQIEKFSEYIFNAGYSSPVRTPRGRDILAACGQLKSETEKLSVRERDALRAMAMTD</sequence>
<organism>
    <name type="scientific">Rhodopseudomonas palustris (strain BisB5)</name>
    <dbReference type="NCBI Taxonomy" id="316057"/>
    <lineage>
        <taxon>Bacteria</taxon>
        <taxon>Pseudomonadati</taxon>
        <taxon>Pseudomonadota</taxon>
        <taxon>Alphaproteobacteria</taxon>
        <taxon>Hyphomicrobiales</taxon>
        <taxon>Nitrobacteraceae</taxon>
        <taxon>Rhodopseudomonas</taxon>
    </lineage>
</organism>
<accession>Q13D92</accession>
<keyword id="KW-0004">4Fe-4S</keyword>
<keyword id="KW-0963">Cytoplasm</keyword>
<keyword id="KW-1015">Disulfide bond</keyword>
<keyword id="KW-0408">Iron</keyword>
<keyword id="KW-0411">Iron-sulfur</keyword>
<keyword id="KW-0479">Metal-binding</keyword>
<keyword id="KW-0489">Methyltransferase</keyword>
<keyword id="KW-0698">rRNA processing</keyword>
<keyword id="KW-0949">S-adenosyl-L-methionine</keyword>
<keyword id="KW-0808">Transferase</keyword>
<keyword id="KW-0819">tRNA processing</keyword>
<proteinExistence type="inferred from homology"/>
<reference key="1">
    <citation type="submission" date="2006-03" db="EMBL/GenBank/DDBJ databases">
        <title>Complete sequence of Rhodopseudomonas palustris BisB5.</title>
        <authorList>
            <consortium name="US DOE Joint Genome Institute"/>
            <person name="Copeland A."/>
            <person name="Lucas S."/>
            <person name="Lapidus A."/>
            <person name="Barry K."/>
            <person name="Detter J.C."/>
            <person name="Glavina del Rio T."/>
            <person name="Hammon N."/>
            <person name="Israni S."/>
            <person name="Dalin E."/>
            <person name="Tice H."/>
            <person name="Pitluck S."/>
            <person name="Chain P."/>
            <person name="Malfatti S."/>
            <person name="Shin M."/>
            <person name="Vergez L."/>
            <person name="Schmutz J."/>
            <person name="Larimer F."/>
            <person name="Land M."/>
            <person name="Hauser L."/>
            <person name="Pelletier D.A."/>
            <person name="Kyrpides N."/>
            <person name="Lykidis A."/>
            <person name="Oda Y."/>
            <person name="Harwood C.S."/>
            <person name="Richardson P."/>
        </authorList>
    </citation>
    <scope>NUCLEOTIDE SEQUENCE [LARGE SCALE GENOMIC DNA]</scope>
    <source>
        <strain>BisB5</strain>
    </source>
</reference>
<dbReference type="EC" id="2.1.1.192" evidence="1"/>
<dbReference type="EMBL" id="CP000283">
    <property type="protein sequence ID" value="ABE37947.1"/>
    <property type="molecule type" value="Genomic_DNA"/>
</dbReference>
<dbReference type="SMR" id="Q13D92"/>
<dbReference type="STRING" id="316057.RPD_0709"/>
<dbReference type="KEGG" id="rpd:RPD_0709"/>
<dbReference type="eggNOG" id="COG0820">
    <property type="taxonomic scope" value="Bacteria"/>
</dbReference>
<dbReference type="HOGENOM" id="CLU_029101_2_0_5"/>
<dbReference type="BioCyc" id="RPAL316057:RPD_RS03620-MONOMER"/>
<dbReference type="Proteomes" id="UP000001818">
    <property type="component" value="Chromosome"/>
</dbReference>
<dbReference type="GO" id="GO:0005737">
    <property type="term" value="C:cytoplasm"/>
    <property type="evidence" value="ECO:0007669"/>
    <property type="project" value="UniProtKB-SubCell"/>
</dbReference>
<dbReference type="GO" id="GO:0051539">
    <property type="term" value="F:4 iron, 4 sulfur cluster binding"/>
    <property type="evidence" value="ECO:0007669"/>
    <property type="project" value="UniProtKB-UniRule"/>
</dbReference>
<dbReference type="GO" id="GO:0046872">
    <property type="term" value="F:metal ion binding"/>
    <property type="evidence" value="ECO:0007669"/>
    <property type="project" value="UniProtKB-KW"/>
</dbReference>
<dbReference type="GO" id="GO:0070040">
    <property type="term" value="F:rRNA (adenine(2503)-C2-)-methyltransferase activity"/>
    <property type="evidence" value="ECO:0007669"/>
    <property type="project" value="UniProtKB-UniRule"/>
</dbReference>
<dbReference type="GO" id="GO:0019843">
    <property type="term" value="F:rRNA binding"/>
    <property type="evidence" value="ECO:0007669"/>
    <property type="project" value="UniProtKB-UniRule"/>
</dbReference>
<dbReference type="GO" id="GO:0002935">
    <property type="term" value="F:tRNA (adenine(37)-C2)-methyltransferase activity"/>
    <property type="evidence" value="ECO:0007669"/>
    <property type="project" value="UniProtKB-UniRule"/>
</dbReference>
<dbReference type="GO" id="GO:0000049">
    <property type="term" value="F:tRNA binding"/>
    <property type="evidence" value="ECO:0007669"/>
    <property type="project" value="UniProtKB-UniRule"/>
</dbReference>
<dbReference type="GO" id="GO:0070475">
    <property type="term" value="P:rRNA base methylation"/>
    <property type="evidence" value="ECO:0007669"/>
    <property type="project" value="UniProtKB-UniRule"/>
</dbReference>
<dbReference type="GO" id="GO:0030488">
    <property type="term" value="P:tRNA methylation"/>
    <property type="evidence" value="ECO:0007669"/>
    <property type="project" value="UniProtKB-UniRule"/>
</dbReference>
<dbReference type="CDD" id="cd01335">
    <property type="entry name" value="Radical_SAM"/>
    <property type="match status" value="1"/>
</dbReference>
<dbReference type="FunFam" id="3.20.20.70:FF:000008">
    <property type="entry name" value="Dual-specificity RNA methyltransferase RlmN"/>
    <property type="match status" value="1"/>
</dbReference>
<dbReference type="Gene3D" id="1.10.150.530">
    <property type="match status" value="1"/>
</dbReference>
<dbReference type="Gene3D" id="3.20.20.70">
    <property type="entry name" value="Aldolase class I"/>
    <property type="match status" value="1"/>
</dbReference>
<dbReference type="HAMAP" id="MF_01849">
    <property type="entry name" value="RNA_methyltr_RlmN"/>
    <property type="match status" value="1"/>
</dbReference>
<dbReference type="InterPro" id="IPR013785">
    <property type="entry name" value="Aldolase_TIM"/>
</dbReference>
<dbReference type="InterPro" id="IPR040072">
    <property type="entry name" value="Methyltransferase_A"/>
</dbReference>
<dbReference type="InterPro" id="IPR048641">
    <property type="entry name" value="RlmN_N"/>
</dbReference>
<dbReference type="InterPro" id="IPR027492">
    <property type="entry name" value="RNA_MTrfase_RlmN"/>
</dbReference>
<dbReference type="InterPro" id="IPR004383">
    <property type="entry name" value="rRNA_lsu_MTrfase_RlmN/Cfr"/>
</dbReference>
<dbReference type="InterPro" id="IPR007197">
    <property type="entry name" value="rSAM"/>
</dbReference>
<dbReference type="NCBIfam" id="TIGR00048">
    <property type="entry name" value="rRNA_mod_RlmN"/>
    <property type="match status" value="1"/>
</dbReference>
<dbReference type="PANTHER" id="PTHR30544">
    <property type="entry name" value="23S RRNA METHYLTRANSFERASE"/>
    <property type="match status" value="1"/>
</dbReference>
<dbReference type="PANTHER" id="PTHR30544:SF5">
    <property type="entry name" value="RADICAL SAM CORE DOMAIN-CONTAINING PROTEIN"/>
    <property type="match status" value="1"/>
</dbReference>
<dbReference type="Pfam" id="PF04055">
    <property type="entry name" value="Radical_SAM"/>
    <property type="match status" value="1"/>
</dbReference>
<dbReference type="Pfam" id="PF21016">
    <property type="entry name" value="RlmN_N"/>
    <property type="match status" value="1"/>
</dbReference>
<dbReference type="PIRSF" id="PIRSF006004">
    <property type="entry name" value="CHP00048"/>
    <property type="match status" value="1"/>
</dbReference>
<dbReference type="SFLD" id="SFLDF00275">
    <property type="entry name" value="adenosine_C2_methyltransferase"/>
    <property type="match status" value="1"/>
</dbReference>
<dbReference type="SFLD" id="SFLDG01062">
    <property type="entry name" value="methyltransferase_(Class_A)"/>
    <property type="match status" value="1"/>
</dbReference>
<dbReference type="SUPFAM" id="SSF102114">
    <property type="entry name" value="Radical SAM enzymes"/>
    <property type="match status" value="1"/>
</dbReference>
<dbReference type="PROSITE" id="PS51918">
    <property type="entry name" value="RADICAL_SAM"/>
    <property type="match status" value="1"/>
</dbReference>
<name>RLMN_RHOPS</name>
<comment type="function">
    <text evidence="1">Specifically methylates position 2 of adenine 2503 in 23S rRNA and position 2 of adenine 37 in tRNAs. m2A2503 modification seems to play a crucial role in the proofreading step occurring at the peptidyl transferase center and thus would serve to optimize ribosomal fidelity.</text>
</comment>
<comment type="catalytic activity">
    <reaction evidence="1">
        <text>adenosine(2503) in 23S rRNA + 2 reduced [2Fe-2S]-[ferredoxin] + 2 S-adenosyl-L-methionine = 2-methyladenosine(2503) in 23S rRNA + 5'-deoxyadenosine + L-methionine + 2 oxidized [2Fe-2S]-[ferredoxin] + S-adenosyl-L-homocysteine</text>
        <dbReference type="Rhea" id="RHEA:42916"/>
        <dbReference type="Rhea" id="RHEA-COMP:10000"/>
        <dbReference type="Rhea" id="RHEA-COMP:10001"/>
        <dbReference type="Rhea" id="RHEA-COMP:10152"/>
        <dbReference type="Rhea" id="RHEA-COMP:10282"/>
        <dbReference type="ChEBI" id="CHEBI:17319"/>
        <dbReference type="ChEBI" id="CHEBI:33737"/>
        <dbReference type="ChEBI" id="CHEBI:33738"/>
        <dbReference type="ChEBI" id="CHEBI:57844"/>
        <dbReference type="ChEBI" id="CHEBI:57856"/>
        <dbReference type="ChEBI" id="CHEBI:59789"/>
        <dbReference type="ChEBI" id="CHEBI:74411"/>
        <dbReference type="ChEBI" id="CHEBI:74497"/>
        <dbReference type="EC" id="2.1.1.192"/>
    </reaction>
</comment>
<comment type="catalytic activity">
    <reaction evidence="1">
        <text>adenosine(37) in tRNA + 2 reduced [2Fe-2S]-[ferredoxin] + 2 S-adenosyl-L-methionine = 2-methyladenosine(37) in tRNA + 5'-deoxyadenosine + L-methionine + 2 oxidized [2Fe-2S]-[ferredoxin] + S-adenosyl-L-homocysteine</text>
        <dbReference type="Rhea" id="RHEA:43332"/>
        <dbReference type="Rhea" id="RHEA-COMP:10000"/>
        <dbReference type="Rhea" id="RHEA-COMP:10001"/>
        <dbReference type="Rhea" id="RHEA-COMP:10162"/>
        <dbReference type="Rhea" id="RHEA-COMP:10485"/>
        <dbReference type="ChEBI" id="CHEBI:17319"/>
        <dbReference type="ChEBI" id="CHEBI:33737"/>
        <dbReference type="ChEBI" id="CHEBI:33738"/>
        <dbReference type="ChEBI" id="CHEBI:57844"/>
        <dbReference type="ChEBI" id="CHEBI:57856"/>
        <dbReference type="ChEBI" id="CHEBI:59789"/>
        <dbReference type="ChEBI" id="CHEBI:74411"/>
        <dbReference type="ChEBI" id="CHEBI:74497"/>
        <dbReference type="EC" id="2.1.1.192"/>
    </reaction>
</comment>
<comment type="cofactor">
    <cofactor evidence="1">
        <name>[4Fe-4S] cluster</name>
        <dbReference type="ChEBI" id="CHEBI:49883"/>
    </cofactor>
    <text evidence="1">Binds 1 [4Fe-4S] cluster. The cluster is coordinated with 3 cysteines and an exchangeable S-adenosyl-L-methionine.</text>
</comment>
<comment type="subcellular location">
    <subcellularLocation>
        <location evidence="1">Cytoplasm</location>
    </subcellularLocation>
</comment>
<comment type="miscellaneous">
    <text evidence="1">Reaction proceeds by a ping-pong mechanism involving intermediate methylation of a conserved cysteine residue.</text>
</comment>
<comment type="similarity">
    <text evidence="1">Belongs to the radical SAM superfamily. RlmN family.</text>
</comment>
<feature type="chain" id="PRO_0000350371" description="Dual-specificity RNA methyltransferase RlmN">
    <location>
        <begin position="1"/>
        <end position="398"/>
    </location>
</feature>
<feature type="domain" description="Radical SAM core" evidence="2">
    <location>
        <begin position="127"/>
        <end position="370"/>
    </location>
</feature>
<feature type="active site" description="Proton acceptor" evidence="1">
    <location>
        <position position="121"/>
    </location>
</feature>
<feature type="active site" description="S-methylcysteine intermediate" evidence="1">
    <location>
        <position position="373"/>
    </location>
</feature>
<feature type="binding site" evidence="1">
    <location>
        <position position="141"/>
    </location>
    <ligand>
        <name>[4Fe-4S] cluster</name>
        <dbReference type="ChEBI" id="CHEBI:49883"/>
        <note>4Fe-4S-S-AdoMet</note>
    </ligand>
</feature>
<feature type="binding site" evidence="1">
    <location>
        <position position="145"/>
    </location>
    <ligand>
        <name>[4Fe-4S] cluster</name>
        <dbReference type="ChEBI" id="CHEBI:49883"/>
        <note>4Fe-4S-S-AdoMet</note>
    </ligand>
</feature>
<feature type="binding site" evidence="1">
    <location>
        <position position="148"/>
    </location>
    <ligand>
        <name>[4Fe-4S] cluster</name>
        <dbReference type="ChEBI" id="CHEBI:49883"/>
        <note>4Fe-4S-S-AdoMet</note>
    </ligand>
</feature>
<feature type="binding site" evidence="1">
    <location>
        <begin position="199"/>
        <end position="200"/>
    </location>
    <ligand>
        <name>S-adenosyl-L-methionine</name>
        <dbReference type="ChEBI" id="CHEBI:59789"/>
    </ligand>
</feature>
<feature type="binding site" evidence="1">
    <location>
        <position position="231"/>
    </location>
    <ligand>
        <name>S-adenosyl-L-methionine</name>
        <dbReference type="ChEBI" id="CHEBI:59789"/>
    </ligand>
</feature>
<feature type="binding site" evidence="1">
    <location>
        <begin position="253"/>
        <end position="255"/>
    </location>
    <ligand>
        <name>S-adenosyl-L-methionine</name>
        <dbReference type="ChEBI" id="CHEBI:59789"/>
    </ligand>
</feature>
<feature type="binding site" evidence="1">
    <location>
        <position position="330"/>
    </location>
    <ligand>
        <name>S-adenosyl-L-methionine</name>
        <dbReference type="ChEBI" id="CHEBI:59789"/>
    </ligand>
</feature>
<feature type="disulfide bond" description="(transient)" evidence="1">
    <location>
        <begin position="134"/>
        <end position="373"/>
    </location>
</feature>
<protein>
    <recommendedName>
        <fullName evidence="1">Dual-specificity RNA methyltransferase RlmN</fullName>
        <ecNumber evidence="1">2.1.1.192</ecNumber>
    </recommendedName>
    <alternativeName>
        <fullName evidence="1">23S rRNA (adenine(2503)-C(2))-methyltransferase</fullName>
    </alternativeName>
    <alternativeName>
        <fullName evidence="1">23S rRNA m2A2503 methyltransferase</fullName>
    </alternativeName>
    <alternativeName>
        <fullName evidence="1">Ribosomal RNA large subunit methyltransferase N</fullName>
    </alternativeName>
    <alternativeName>
        <fullName evidence="1">tRNA (adenine(37)-C(2))-methyltransferase</fullName>
    </alternativeName>
    <alternativeName>
        <fullName evidence="1">tRNA m2A37 methyltransferase</fullName>
    </alternativeName>
</protein>